<organism>
    <name type="scientific">Nitrosospira multiformis (strain ATCC 25196 / NCIMB 11849 / C 71)</name>
    <dbReference type="NCBI Taxonomy" id="323848"/>
    <lineage>
        <taxon>Bacteria</taxon>
        <taxon>Pseudomonadati</taxon>
        <taxon>Pseudomonadota</taxon>
        <taxon>Betaproteobacteria</taxon>
        <taxon>Nitrosomonadales</taxon>
        <taxon>Nitrosomonadaceae</taxon>
        <taxon>Nitrosospira</taxon>
    </lineage>
</organism>
<keyword id="KW-1185">Reference proteome</keyword>
<name>Y2478_NITMU</name>
<proteinExistence type="inferred from homology"/>
<feature type="chain" id="PRO_0000258848" description="UPF0301 protein Nmul_A2478">
    <location>
        <begin position="1"/>
        <end position="186"/>
    </location>
</feature>
<protein>
    <recommendedName>
        <fullName evidence="1">UPF0301 protein Nmul_A2478</fullName>
    </recommendedName>
</protein>
<gene>
    <name type="ordered locus">Nmul_A2478</name>
</gene>
<sequence>MQSVDLTHHFLIAMPAMTDPFFAKTLTYICEHSDQGALGLVVNRPIDLTLKDLLDQLDISSDDQLTRRFPIMFGGPIQLDRGFVLHQPVGEWQSTMAVNDDVGLTTSLDILRAIANGESPRQLLVALGYSGWAPGQIEHELSRNAWLTVPASPAIIFELPAEERLTAAMRLLGVDFSSLSDEVGHA</sequence>
<reference key="1">
    <citation type="submission" date="2005-08" db="EMBL/GenBank/DDBJ databases">
        <title>Complete sequence of chromosome 1 of Nitrosospira multiformis ATCC 25196.</title>
        <authorList>
            <person name="Copeland A."/>
            <person name="Lucas S."/>
            <person name="Lapidus A."/>
            <person name="Barry K."/>
            <person name="Detter J.C."/>
            <person name="Glavina T."/>
            <person name="Hammon N."/>
            <person name="Israni S."/>
            <person name="Pitluck S."/>
            <person name="Chain P."/>
            <person name="Malfatti S."/>
            <person name="Shin M."/>
            <person name="Vergez L."/>
            <person name="Schmutz J."/>
            <person name="Larimer F."/>
            <person name="Land M."/>
            <person name="Hauser L."/>
            <person name="Kyrpides N."/>
            <person name="Lykidis A."/>
            <person name="Richardson P."/>
        </authorList>
    </citation>
    <scope>NUCLEOTIDE SEQUENCE [LARGE SCALE GENOMIC DNA]</scope>
    <source>
        <strain>ATCC 25196 / NCIMB 11849 / C 71</strain>
    </source>
</reference>
<evidence type="ECO:0000255" key="1">
    <source>
        <dbReference type="HAMAP-Rule" id="MF_00758"/>
    </source>
</evidence>
<accession>Q2Y654</accession>
<dbReference type="EMBL" id="CP000103">
    <property type="protein sequence ID" value="ABB75767.1"/>
    <property type="molecule type" value="Genomic_DNA"/>
</dbReference>
<dbReference type="RefSeq" id="WP_011381766.1">
    <property type="nucleotide sequence ID" value="NC_007614.1"/>
</dbReference>
<dbReference type="SMR" id="Q2Y654"/>
<dbReference type="STRING" id="323848.Nmul_A2478"/>
<dbReference type="KEGG" id="nmu:Nmul_A2478"/>
<dbReference type="eggNOG" id="COG1678">
    <property type="taxonomic scope" value="Bacteria"/>
</dbReference>
<dbReference type="HOGENOM" id="CLU_057596_1_0_4"/>
<dbReference type="OrthoDB" id="9807486at2"/>
<dbReference type="Proteomes" id="UP000002718">
    <property type="component" value="Chromosome"/>
</dbReference>
<dbReference type="GO" id="GO:0005829">
    <property type="term" value="C:cytosol"/>
    <property type="evidence" value="ECO:0007669"/>
    <property type="project" value="TreeGrafter"/>
</dbReference>
<dbReference type="Gene3D" id="3.40.1740.10">
    <property type="entry name" value="VC0467-like"/>
    <property type="match status" value="1"/>
</dbReference>
<dbReference type="HAMAP" id="MF_00758">
    <property type="entry name" value="UPF0301"/>
    <property type="match status" value="1"/>
</dbReference>
<dbReference type="InterPro" id="IPR003774">
    <property type="entry name" value="AlgH-like"/>
</dbReference>
<dbReference type="NCBIfam" id="NF001266">
    <property type="entry name" value="PRK00228.1-1"/>
    <property type="match status" value="1"/>
</dbReference>
<dbReference type="PANTHER" id="PTHR30327">
    <property type="entry name" value="UNCHARACTERIZED PROTEIN YQGE"/>
    <property type="match status" value="1"/>
</dbReference>
<dbReference type="PANTHER" id="PTHR30327:SF1">
    <property type="entry name" value="UPF0301 PROTEIN YQGE"/>
    <property type="match status" value="1"/>
</dbReference>
<dbReference type="Pfam" id="PF02622">
    <property type="entry name" value="DUF179"/>
    <property type="match status" value="1"/>
</dbReference>
<dbReference type="SUPFAM" id="SSF143456">
    <property type="entry name" value="VC0467-like"/>
    <property type="match status" value="1"/>
</dbReference>
<comment type="similarity">
    <text evidence="1">Belongs to the UPF0301 (AlgH) family.</text>
</comment>